<reference key="1">
    <citation type="submission" date="2006-10" db="EMBL/GenBank/DDBJ databases">
        <authorList>
            <person name="Fleischmann R.D."/>
            <person name="Dodson R.J."/>
            <person name="Haft D.H."/>
            <person name="Merkel J.S."/>
            <person name="Nelson W.C."/>
            <person name="Fraser C.M."/>
        </authorList>
    </citation>
    <scope>NUCLEOTIDE SEQUENCE [LARGE SCALE GENOMIC DNA]</scope>
    <source>
        <strain>ATCC 700084 / mc(2)155</strain>
    </source>
</reference>
<reference key="2">
    <citation type="journal article" date="2007" name="Genome Biol.">
        <title>Interrupted coding sequences in Mycobacterium smegmatis: authentic mutations or sequencing errors?</title>
        <authorList>
            <person name="Deshayes C."/>
            <person name="Perrodou E."/>
            <person name="Gallien S."/>
            <person name="Euphrasie D."/>
            <person name="Schaeffer C."/>
            <person name="Van-Dorsselaer A."/>
            <person name="Poch O."/>
            <person name="Lecompte O."/>
            <person name="Reyrat J.-M."/>
        </authorList>
    </citation>
    <scope>NUCLEOTIDE SEQUENCE [LARGE SCALE GENOMIC DNA]</scope>
    <source>
        <strain>ATCC 700084 / mc(2)155</strain>
    </source>
</reference>
<reference key="3">
    <citation type="journal article" date="2009" name="Genome Res.">
        <title>Ortho-proteogenomics: multiple proteomes investigation through orthology and a new MS-based protocol.</title>
        <authorList>
            <person name="Gallien S."/>
            <person name="Perrodou E."/>
            <person name="Carapito C."/>
            <person name="Deshayes C."/>
            <person name="Reyrat J.-M."/>
            <person name="Van Dorsselaer A."/>
            <person name="Poch O."/>
            <person name="Schaeffer C."/>
            <person name="Lecompte O."/>
        </authorList>
    </citation>
    <scope>NUCLEOTIDE SEQUENCE [LARGE SCALE GENOMIC DNA]</scope>
    <source>
        <strain>ATCC 700084 / mc(2)155</strain>
    </source>
</reference>
<accession>A0QUX1</accession>
<accession>I7FZV0</accession>
<name>GATB_MYCS2</name>
<comment type="function">
    <text evidence="1">Allows the formation of correctly charged Asn-tRNA(Asn) or Gln-tRNA(Gln) through the transamidation of misacylated Asp-tRNA(Asn) or Glu-tRNA(Gln) in organisms which lack either or both of asparaginyl-tRNA or glutaminyl-tRNA synthetases. The reaction takes place in the presence of glutamine and ATP through an activated phospho-Asp-tRNA(Asn) or phospho-Glu-tRNA(Gln).</text>
</comment>
<comment type="catalytic activity">
    <reaction evidence="1">
        <text>L-glutamyl-tRNA(Gln) + L-glutamine + ATP + H2O = L-glutaminyl-tRNA(Gln) + L-glutamate + ADP + phosphate + H(+)</text>
        <dbReference type="Rhea" id="RHEA:17521"/>
        <dbReference type="Rhea" id="RHEA-COMP:9681"/>
        <dbReference type="Rhea" id="RHEA-COMP:9684"/>
        <dbReference type="ChEBI" id="CHEBI:15377"/>
        <dbReference type="ChEBI" id="CHEBI:15378"/>
        <dbReference type="ChEBI" id="CHEBI:29985"/>
        <dbReference type="ChEBI" id="CHEBI:30616"/>
        <dbReference type="ChEBI" id="CHEBI:43474"/>
        <dbReference type="ChEBI" id="CHEBI:58359"/>
        <dbReference type="ChEBI" id="CHEBI:78520"/>
        <dbReference type="ChEBI" id="CHEBI:78521"/>
        <dbReference type="ChEBI" id="CHEBI:456216"/>
    </reaction>
</comment>
<comment type="catalytic activity">
    <reaction evidence="1">
        <text>L-aspartyl-tRNA(Asn) + L-glutamine + ATP + H2O = L-asparaginyl-tRNA(Asn) + L-glutamate + ADP + phosphate + 2 H(+)</text>
        <dbReference type="Rhea" id="RHEA:14513"/>
        <dbReference type="Rhea" id="RHEA-COMP:9674"/>
        <dbReference type="Rhea" id="RHEA-COMP:9677"/>
        <dbReference type="ChEBI" id="CHEBI:15377"/>
        <dbReference type="ChEBI" id="CHEBI:15378"/>
        <dbReference type="ChEBI" id="CHEBI:29985"/>
        <dbReference type="ChEBI" id="CHEBI:30616"/>
        <dbReference type="ChEBI" id="CHEBI:43474"/>
        <dbReference type="ChEBI" id="CHEBI:58359"/>
        <dbReference type="ChEBI" id="CHEBI:78515"/>
        <dbReference type="ChEBI" id="CHEBI:78516"/>
        <dbReference type="ChEBI" id="CHEBI:456216"/>
    </reaction>
</comment>
<comment type="subunit">
    <text evidence="1">Heterotrimer of A, B and C subunits.</text>
</comment>
<comment type="similarity">
    <text evidence="1">Belongs to the GatB/GatE family. GatB subfamily.</text>
</comment>
<feature type="chain" id="PRO_1000016001" description="Aspartyl/glutamyl-tRNA(Asn/Gln) amidotransferase subunit B">
    <location>
        <begin position="1"/>
        <end position="503"/>
    </location>
</feature>
<keyword id="KW-0067">ATP-binding</keyword>
<keyword id="KW-0436">Ligase</keyword>
<keyword id="KW-0547">Nucleotide-binding</keyword>
<keyword id="KW-0648">Protein biosynthesis</keyword>
<keyword id="KW-1185">Reference proteome</keyword>
<protein>
    <recommendedName>
        <fullName evidence="1">Aspartyl/glutamyl-tRNA(Asn/Gln) amidotransferase subunit B</fullName>
        <shortName evidence="1">Asp/Glu-ADT subunit B</shortName>
        <ecNumber evidence="1">6.3.5.-</ecNumber>
    </recommendedName>
</protein>
<gene>
    <name evidence="1" type="primary">gatB</name>
    <name type="ordered locus">MSMEG_2367</name>
    <name type="ordered locus">MSMEI_2307</name>
</gene>
<organism>
    <name type="scientific">Mycolicibacterium smegmatis (strain ATCC 700084 / mc(2)155)</name>
    <name type="common">Mycobacterium smegmatis</name>
    <dbReference type="NCBI Taxonomy" id="246196"/>
    <lineage>
        <taxon>Bacteria</taxon>
        <taxon>Bacillati</taxon>
        <taxon>Actinomycetota</taxon>
        <taxon>Actinomycetes</taxon>
        <taxon>Mycobacteriales</taxon>
        <taxon>Mycobacteriaceae</taxon>
        <taxon>Mycolicibacterium</taxon>
    </lineage>
</organism>
<sequence length="503" mass="54400">MTAATTAELVDFDDVVARYEPVMGMEVHVELSTATKMFCGCANRFGAEPNTLVCPVCLGLPGALPVLNEAAVESAIRIGLALNCEITPWGRFARKNYFYPDQPKNYQISQYDEPIAVDGYLDVPLEDGTTWRVEIERAHMEEDTGKLTHLGSDTGRIAGATTSLADYNRAGVPLIEIVTKPIEGAGARAPEIARAYVTALRQLMRALDVSDVRMDQGSMRCDSNVSLKPKGAKEFGTRTETKNVNSLRSVEVAVRYEMRRQAAVLDAGGTVTQETRHFHEDGYTSPGRSKETAQDYRYFPEPDLEPVAPSPELVERLRTTIPELPWLARKRIQDDWGVSDEVMRDLVNAGAVELVAATVDHGVSSEAARAWWGNFLVQKANEAGVELDELPISPAQVAAVVKLVDEGKLSNKLARQVVEGVLAGEGEPEQVMTDRGLALVRDDSVIQAAVDEALAANPDIVEKIRGGKVQAAGAIVGAVMKATKGSADAARVRELVLAACGQS</sequence>
<dbReference type="EC" id="6.3.5.-" evidence="1"/>
<dbReference type="EMBL" id="CP000480">
    <property type="protein sequence ID" value="ABK74332.1"/>
    <property type="molecule type" value="Genomic_DNA"/>
</dbReference>
<dbReference type="EMBL" id="CP001663">
    <property type="protein sequence ID" value="AFP38777.1"/>
    <property type="molecule type" value="Genomic_DNA"/>
</dbReference>
<dbReference type="RefSeq" id="WP_003893735.1">
    <property type="nucleotide sequence ID" value="NZ_SIJM01000012.1"/>
</dbReference>
<dbReference type="RefSeq" id="YP_886709.1">
    <property type="nucleotide sequence ID" value="NC_008596.1"/>
</dbReference>
<dbReference type="SMR" id="A0QUX1"/>
<dbReference type="IntAct" id="A0QUX1">
    <property type="interactions" value="1"/>
</dbReference>
<dbReference type="STRING" id="246196.MSMEG_2367"/>
<dbReference type="PaxDb" id="246196-MSMEI_2307"/>
<dbReference type="GeneID" id="93457158"/>
<dbReference type="KEGG" id="msb:LJ00_11770"/>
<dbReference type="KEGG" id="msg:MSMEI_2307"/>
<dbReference type="KEGG" id="msm:MSMEG_2367"/>
<dbReference type="PATRIC" id="fig|246196.19.peg.2333"/>
<dbReference type="eggNOG" id="COG0064">
    <property type="taxonomic scope" value="Bacteria"/>
</dbReference>
<dbReference type="OrthoDB" id="9804078at2"/>
<dbReference type="Proteomes" id="UP000000757">
    <property type="component" value="Chromosome"/>
</dbReference>
<dbReference type="Proteomes" id="UP000006158">
    <property type="component" value="Chromosome"/>
</dbReference>
<dbReference type="GO" id="GO:0050566">
    <property type="term" value="F:asparaginyl-tRNA synthase (glutamine-hydrolyzing) activity"/>
    <property type="evidence" value="ECO:0007669"/>
    <property type="project" value="RHEA"/>
</dbReference>
<dbReference type="GO" id="GO:0005524">
    <property type="term" value="F:ATP binding"/>
    <property type="evidence" value="ECO:0007669"/>
    <property type="project" value="UniProtKB-KW"/>
</dbReference>
<dbReference type="GO" id="GO:0050567">
    <property type="term" value="F:glutaminyl-tRNA synthase (glutamine-hydrolyzing) activity"/>
    <property type="evidence" value="ECO:0007669"/>
    <property type="project" value="UniProtKB-UniRule"/>
</dbReference>
<dbReference type="GO" id="GO:0070681">
    <property type="term" value="P:glutaminyl-tRNAGln biosynthesis via transamidation"/>
    <property type="evidence" value="ECO:0007669"/>
    <property type="project" value="TreeGrafter"/>
</dbReference>
<dbReference type="GO" id="GO:0006412">
    <property type="term" value="P:translation"/>
    <property type="evidence" value="ECO:0007669"/>
    <property type="project" value="UniProtKB-UniRule"/>
</dbReference>
<dbReference type="FunFam" id="1.10.10.410:FF:000002">
    <property type="entry name" value="Aspartyl/glutamyl-tRNA(Asn/Gln) amidotransferase subunit B"/>
    <property type="match status" value="1"/>
</dbReference>
<dbReference type="Gene3D" id="1.10.10.410">
    <property type="match status" value="1"/>
</dbReference>
<dbReference type="HAMAP" id="MF_00121">
    <property type="entry name" value="GatB"/>
    <property type="match status" value="1"/>
</dbReference>
<dbReference type="InterPro" id="IPR017959">
    <property type="entry name" value="Asn/Gln-tRNA_amidoTrfase_suB/E"/>
</dbReference>
<dbReference type="InterPro" id="IPR006075">
    <property type="entry name" value="Asn/Gln-tRNA_Trfase_suB/E_cat"/>
</dbReference>
<dbReference type="InterPro" id="IPR018027">
    <property type="entry name" value="Asn/Gln_amidotransferase"/>
</dbReference>
<dbReference type="InterPro" id="IPR003789">
    <property type="entry name" value="Asn/Gln_tRNA_amidoTrase-B-like"/>
</dbReference>
<dbReference type="InterPro" id="IPR004413">
    <property type="entry name" value="GatB"/>
</dbReference>
<dbReference type="InterPro" id="IPR023168">
    <property type="entry name" value="GatB_Yqey_C_2"/>
</dbReference>
<dbReference type="InterPro" id="IPR017958">
    <property type="entry name" value="Gln-tRNA_amidoTrfase_suB_CS"/>
</dbReference>
<dbReference type="InterPro" id="IPR014746">
    <property type="entry name" value="Gln_synth/guanido_kin_cat_dom"/>
</dbReference>
<dbReference type="NCBIfam" id="TIGR00133">
    <property type="entry name" value="gatB"/>
    <property type="match status" value="1"/>
</dbReference>
<dbReference type="NCBIfam" id="NF004012">
    <property type="entry name" value="PRK05477.1-2"/>
    <property type="match status" value="1"/>
</dbReference>
<dbReference type="NCBIfam" id="NF004013">
    <property type="entry name" value="PRK05477.1-3"/>
    <property type="match status" value="1"/>
</dbReference>
<dbReference type="NCBIfam" id="NF004014">
    <property type="entry name" value="PRK05477.1-4"/>
    <property type="match status" value="1"/>
</dbReference>
<dbReference type="PANTHER" id="PTHR11659">
    <property type="entry name" value="GLUTAMYL-TRNA GLN AMIDOTRANSFERASE SUBUNIT B MITOCHONDRIAL AND PROKARYOTIC PET112-RELATED"/>
    <property type="match status" value="1"/>
</dbReference>
<dbReference type="PANTHER" id="PTHR11659:SF0">
    <property type="entry name" value="GLUTAMYL-TRNA(GLN) AMIDOTRANSFERASE SUBUNIT B, MITOCHONDRIAL"/>
    <property type="match status" value="1"/>
</dbReference>
<dbReference type="Pfam" id="PF02934">
    <property type="entry name" value="GatB_N"/>
    <property type="match status" value="1"/>
</dbReference>
<dbReference type="Pfam" id="PF02637">
    <property type="entry name" value="GatB_Yqey"/>
    <property type="match status" value="1"/>
</dbReference>
<dbReference type="SMART" id="SM00845">
    <property type="entry name" value="GatB_Yqey"/>
    <property type="match status" value="1"/>
</dbReference>
<dbReference type="SUPFAM" id="SSF89095">
    <property type="entry name" value="GatB/YqeY motif"/>
    <property type="match status" value="1"/>
</dbReference>
<dbReference type="SUPFAM" id="SSF55931">
    <property type="entry name" value="Glutamine synthetase/guanido kinase"/>
    <property type="match status" value="1"/>
</dbReference>
<dbReference type="PROSITE" id="PS01234">
    <property type="entry name" value="GATB"/>
    <property type="match status" value="1"/>
</dbReference>
<proteinExistence type="inferred from homology"/>
<evidence type="ECO:0000255" key="1">
    <source>
        <dbReference type="HAMAP-Rule" id="MF_00121"/>
    </source>
</evidence>